<gene>
    <name evidence="1" type="primary">hisB</name>
    <name type="ordered locus">TGRD_498</name>
</gene>
<comment type="catalytic activity">
    <reaction evidence="1">
        <text>D-erythro-1-(imidazol-4-yl)glycerol 3-phosphate = 3-(imidazol-4-yl)-2-oxopropyl phosphate + H2O</text>
        <dbReference type="Rhea" id="RHEA:11040"/>
        <dbReference type="ChEBI" id="CHEBI:15377"/>
        <dbReference type="ChEBI" id="CHEBI:57766"/>
        <dbReference type="ChEBI" id="CHEBI:58278"/>
        <dbReference type="EC" id="4.2.1.19"/>
    </reaction>
</comment>
<comment type="pathway">
    <text evidence="1">Amino-acid biosynthesis; L-histidine biosynthesis; L-histidine from 5-phospho-alpha-D-ribose 1-diphosphate: step 6/9.</text>
</comment>
<comment type="subcellular location">
    <subcellularLocation>
        <location evidence="1">Cytoplasm</location>
    </subcellularLocation>
</comment>
<comment type="similarity">
    <text evidence="1">Belongs to the imidazoleglycerol-phosphate dehydratase family.</text>
</comment>
<protein>
    <recommendedName>
        <fullName evidence="1">Imidazoleglycerol-phosphate dehydratase</fullName>
        <shortName evidence="1">IGPD</shortName>
        <ecNumber evidence="1">4.2.1.19</ecNumber>
    </recommendedName>
</protein>
<reference key="1">
    <citation type="journal article" date="2008" name="Proc. Natl. Acad. Sci. U.S.A.">
        <title>Complete genome of the uncultured termite group 1 bacteria in a single host protist cell.</title>
        <authorList>
            <person name="Hongoh Y."/>
            <person name="Sharma V.K."/>
            <person name="Prakash T."/>
            <person name="Noda S."/>
            <person name="Taylor T.D."/>
            <person name="Kudo T."/>
            <person name="Sakaki Y."/>
            <person name="Toyoda A."/>
            <person name="Hattori M."/>
            <person name="Ohkuma M."/>
        </authorList>
    </citation>
    <scope>NUCLEOTIDE SEQUENCE [LARGE SCALE GENOMIC DNA]</scope>
</reference>
<name>HIS7_ENDTX</name>
<evidence type="ECO:0000255" key="1">
    <source>
        <dbReference type="HAMAP-Rule" id="MF_00076"/>
    </source>
</evidence>
<proteinExistence type="inferred from homology"/>
<organism>
    <name type="scientific">Endomicrobium trichonymphae</name>
    <dbReference type="NCBI Taxonomy" id="1408204"/>
    <lineage>
        <taxon>Bacteria</taxon>
        <taxon>Pseudomonadati</taxon>
        <taxon>Elusimicrobiota</taxon>
        <taxon>Endomicrobiia</taxon>
        <taxon>Endomicrobiales</taxon>
        <taxon>Endomicrobiaceae</taxon>
        <taxon>Candidatus Endomicrobiellum</taxon>
    </lineage>
</organism>
<dbReference type="EC" id="4.2.1.19" evidence="1"/>
<dbReference type="EMBL" id="AP009510">
    <property type="protein sequence ID" value="BAG13981.1"/>
    <property type="molecule type" value="Genomic_DNA"/>
</dbReference>
<dbReference type="RefSeq" id="WP_015423506.1">
    <property type="nucleotide sequence ID" value="NC_020419.1"/>
</dbReference>
<dbReference type="SMR" id="B1H0E9"/>
<dbReference type="STRING" id="471821.TGRD_498"/>
<dbReference type="KEGG" id="eti:RSTT_363"/>
<dbReference type="KEGG" id="rsd:TGRD_498"/>
<dbReference type="PATRIC" id="fig|471821.5.peg.810"/>
<dbReference type="HOGENOM" id="CLU_044308_3_0_0"/>
<dbReference type="OrthoDB" id="9790411at2"/>
<dbReference type="UniPathway" id="UPA00031">
    <property type="reaction ID" value="UER00011"/>
</dbReference>
<dbReference type="Proteomes" id="UP000001691">
    <property type="component" value="Chromosome"/>
</dbReference>
<dbReference type="GO" id="GO:0005737">
    <property type="term" value="C:cytoplasm"/>
    <property type="evidence" value="ECO:0007669"/>
    <property type="project" value="UniProtKB-SubCell"/>
</dbReference>
<dbReference type="GO" id="GO:0004424">
    <property type="term" value="F:imidazoleglycerol-phosphate dehydratase activity"/>
    <property type="evidence" value="ECO:0007669"/>
    <property type="project" value="UniProtKB-UniRule"/>
</dbReference>
<dbReference type="GO" id="GO:0000105">
    <property type="term" value="P:L-histidine biosynthetic process"/>
    <property type="evidence" value="ECO:0007669"/>
    <property type="project" value="UniProtKB-UniRule"/>
</dbReference>
<dbReference type="CDD" id="cd07914">
    <property type="entry name" value="IGPD"/>
    <property type="match status" value="1"/>
</dbReference>
<dbReference type="FunFam" id="3.30.230.40:FF:000001">
    <property type="entry name" value="Imidazoleglycerol-phosphate dehydratase HisB"/>
    <property type="match status" value="1"/>
</dbReference>
<dbReference type="FunFam" id="3.30.230.40:FF:000003">
    <property type="entry name" value="Imidazoleglycerol-phosphate dehydratase HisB"/>
    <property type="match status" value="1"/>
</dbReference>
<dbReference type="Gene3D" id="3.30.230.40">
    <property type="entry name" value="Imidazole glycerol phosphate dehydratase, domain 1"/>
    <property type="match status" value="2"/>
</dbReference>
<dbReference type="HAMAP" id="MF_00076">
    <property type="entry name" value="HisB"/>
    <property type="match status" value="1"/>
</dbReference>
<dbReference type="InterPro" id="IPR038494">
    <property type="entry name" value="IGPD_sf"/>
</dbReference>
<dbReference type="InterPro" id="IPR000807">
    <property type="entry name" value="ImidazoleglycerolP_deHydtase"/>
</dbReference>
<dbReference type="InterPro" id="IPR020565">
    <property type="entry name" value="ImidazoleglycerP_deHydtase_CS"/>
</dbReference>
<dbReference type="InterPro" id="IPR020568">
    <property type="entry name" value="Ribosomal_Su5_D2-typ_SF"/>
</dbReference>
<dbReference type="NCBIfam" id="NF002111">
    <property type="entry name" value="PRK00951.2-1"/>
    <property type="match status" value="1"/>
</dbReference>
<dbReference type="NCBIfam" id="NF002114">
    <property type="entry name" value="PRK00951.2-4"/>
    <property type="match status" value="1"/>
</dbReference>
<dbReference type="PANTHER" id="PTHR23133:SF2">
    <property type="entry name" value="IMIDAZOLEGLYCEROL-PHOSPHATE DEHYDRATASE"/>
    <property type="match status" value="1"/>
</dbReference>
<dbReference type="PANTHER" id="PTHR23133">
    <property type="entry name" value="IMIDAZOLEGLYCEROL-PHOSPHATE DEHYDRATASE HIS7"/>
    <property type="match status" value="1"/>
</dbReference>
<dbReference type="Pfam" id="PF00475">
    <property type="entry name" value="IGPD"/>
    <property type="match status" value="1"/>
</dbReference>
<dbReference type="SUPFAM" id="SSF54211">
    <property type="entry name" value="Ribosomal protein S5 domain 2-like"/>
    <property type="match status" value="2"/>
</dbReference>
<dbReference type="PROSITE" id="PS00954">
    <property type="entry name" value="IGP_DEHYDRATASE_1"/>
    <property type="match status" value="1"/>
</dbReference>
<dbReference type="PROSITE" id="PS00955">
    <property type="entry name" value="IGP_DEHYDRATASE_2"/>
    <property type="match status" value="1"/>
</dbReference>
<keyword id="KW-0028">Amino-acid biosynthesis</keyword>
<keyword id="KW-0963">Cytoplasm</keyword>
<keyword id="KW-0368">Histidine biosynthesis</keyword>
<keyword id="KW-0456">Lyase</keyword>
<sequence length="195" mass="21781">MKQRKAKITRKTKETNIVVEINLDNILLPSVSTTIGFLDHMLELFAVHSGIGFKIKASGDTHIDDHHLVEDAGITIGQALKEAVGDKKGIVRYGHFLLPMDETLSYVALDLAGRFYLSYEADIKFQKNGFNYDLIQEFFYALASNAGITLHIKMIKGRNNHHIAESIFKAFGRALRQAVSYSKSKKTVPSTKGIL</sequence>
<accession>B1H0E9</accession>
<feature type="chain" id="PRO_1000092720" description="Imidazoleglycerol-phosphate dehydratase">
    <location>
        <begin position="1"/>
        <end position="195"/>
    </location>
</feature>